<name>RL1_SHOC1</name>
<keyword id="KW-1185">Reference proteome</keyword>
<keyword id="KW-0678">Repressor</keyword>
<keyword id="KW-0687">Ribonucleoprotein</keyword>
<keyword id="KW-0689">Ribosomal protein</keyword>
<keyword id="KW-0694">RNA-binding</keyword>
<keyword id="KW-0699">rRNA-binding</keyword>
<keyword id="KW-0810">Translation regulation</keyword>
<keyword id="KW-0820">tRNA-binding</keyword>
<gene>
    <name evidence="1" type="primary">rplA</name>
    <name type="ordered locus">ABC0138</name>
</gene>
<protein>
    <recommendedName>
        <fullName evidence="1">Large ribosomal subunit protein uL1</fullName>
    </recommendedName>
    <alternativeName>
        <fullName evidence="2">50S ribosomal protein L1</fullName>
    </alternativeName>
</protein>
<evidence type="ECO:0000255" key="1">
    <source>
        <dbReference type="HAMAP-Rule" id="MF_01318"/>
    </source>
</evidence>
<evidence type="ECO:0000305" key="2"/>
<comment type="function">
    <text evidence="1">Binds directly to 23S rRNA. The L1 stalk is quite mobile in the ribosome, and is involved in E site tRNA release.</text>
</comment>
<comment type="function">
    <text evidence="1">Protein L1 is also a translational repressor protein, it controls the translation of the L11 operon by binding to its mRNA.</text>
</comment>
<comment type="subunit">
    <text evidence="1">Part of the 50S ribosomal subunit.</text>
</comment>
<comment type="similarity">
    <text evidence="1">Belongs to the universal ribosomal protein uL1 family.</text>
</comment>
<feature type="chain" id="PRO_0000125614" description="Large ribosomal subunit protein uL1">
    <location>
        <begin position="1"/>
        <end position="231"/>
    </location>
</feature>
<proteinExistence type="inferred from homology"/>
<organism>
    <name type="scientific">Shouchella clausii (strain KSM-K16)</name>
    <name type="common">Alkalihalobacillus clausii</name>
    <dbReference type="NCBI Taxonomy" id="66692"/>
    <lineage>
        <taxon>Bacteria</taxon>
        <taxon>Bacillati</taxon>
        <taxon>Bacillota</taxon>
        <taxon>Bacilli</taxon>
        <taxon>Bacillales</taxon>
        <taxon>Bacillaceae</taxon>
        <taxon>Shouchella</taxon>
    </lineage>
</organism>
<accession>Q5WLS4</accession>
<dbReference type="EMBL" id="AP006627">
    <property type="protein sequence ID" value="BAD62681.1"/>
    <property type="molecule type" value="Genomic_DNA"/>
</dbReference>
<dbReference type="RefSeq" id="WP_011245002.1">
    <property type="nucleotide sequence ID" value="NC_006582.1"/>
</dbReference>
<dbReference type="SMR" id="Q5WLS4"/>
<dbReference type="STRING" id="66692.ABC0138"/>
<dbReference type="GeneID" id="86924174"/>
<dbReference type="KEGG" id="bcl:ABC0138"/>
<dbReference type="eggNOG" id="COG0081">
    <property type="taxonomic scope" value="Bacteria"/>
</dbReference>
<dbReference type="HOGENOM" id="CLU_062853_0_0_9"/>
<dbReference type="OrthoDB" id="9803740at2"/>
<dbReference type="Proteomes" id="UP000001168">
    <property type="component" value="Chromosome"/>
</dbReference>
<dbReference type="GO" id="GO:0015934">
    <property type="term" value="C:large ribosomal subunit"/>
    <property type="evidence" value="ECO:0007669"/>
    <property type="project" value="InterPro"/>
</dbReference>
<dbReference type="GO" id="GO:0019843">
    <property type="term" value="F:rRNA binding"/>
    <property type="evidence" value="ECO:0007669"/>
    <property type="project" value="UniProtKB-UniRule"/>
</dbReference>
<dbReference type="GO" id="GO:0003735">
    <property type="term" value="F:structural constituent of ribosome"/>
    <property type="evidence" value="ECO:0007669"/>
    <property type="project" value="InterPro"/>
</dbReference>
<dbReference type="GO" id="GO:0000049">
    <property type="term" value="F:tRNA binding"/>
    <property type="evidence" value="ECO:0007669"/>
    <property type="project" value="UniProtKB-KW"/>
</dbReference>
<dbReference type="GO" id="GO:0006417">
    <property type="term" value="P:regulation of translation"/>
    <property type="evidence" value="ECO:0007669"/>
    <property type="project" value="UniProtKB-KW"/>
</dbReference>
<dbReference type="GO" id="GO:0006412">
    <property type="term" value="P:translation"/>
    <property type="evidence" value="ECO:0007669"/>
    <property type="project" value="UniProtKB-UniRule"/>
</dbReference>
<dbReference type="CDD" id="cd00403">
    <property type="entry name" value="Ribosomal_L1"/>
    <property type="match status" value="1"/>
</dbReference>
<dbReference type="FunFam" id="3.40.50.790:FF:000001">
    <property type="entry name" value="50S ribosomal protein L1"/>
    <property type="match status" value="1"/>
</dbReference>
<dbReference type="Gene3D" id="3.30.190.20">
    <property type="match status" value="1"/>
</dbReference>
<dbReference type="Gene3D" id="3.40.50.790">
    <property type="match status" value="1"/>
</dbReference>
<dbReference type="HAMAP" id="MF_01318_B">
    <property type="entry name" value="Ribosomal_uL1_B"/>
    <property type="match status" value="1"/>
</dbReference>
<dbReference type="InterPro" id="IPR005878">
    <property type="entry name" value="Ribosom_uL1_bac-type"/>
</dbReference>
<dbReference type="InterPro" id="IPR002143">
    <property type="entry name" value="Ribosomal_uL1"/>
</dbReference>
<dbReference type="InterPro" id="IPR023674">
    <property type="entry name" value="Ribosomal_uL1-like"/>
</dbReference>
<dbReference type="InterPro" id="IPR028364">
    <property type="entry name" value="Ribosomal_uL1/biogenesis"/>
</dbReference>
<dbReference type="InterPro" id="IPR016095">
    <property type="entry name" value="Ribosomal_uL1_3-a/b-sand"/>
</dbReference>
<dbReference type="InterPro" id="IPR023673">
    <property type="entry name" value="Ribosomal_uL1_CS"/>
</dbReference>
<dbReference type="NCBIfam" id="TIGR01169">
    <property type="entry name" value="rplA_bact"/>
    <property type="match status" value="1"/>
</dbReference>
<dbReference type="PANTHER" id="PTHR36427">
    <property type="entry name" value="54S RIBOSOMAL PROTEIN L1, MITOCHONDRIAL"/>
    <property type="match status" value="1"/>
</dbReference>
<dbReference type="PANTHER" id="PTHR36427:SF3">
    <property type="entry name" value="LARGE RIBOSOMAL SUBUNIT PROTEIN UL1M"/>
    <property type="match status" value="1"/>
</dbReference>
<dbReference type="Pfam" id="PF00687">
    <property type="entry name" value="Ribosomal_L1"/>
    <property type="match status" value="1"/>
</dbReference>
<dbReference type="PIRSF" id="PIRSF002155">
    <property type="entry name" value="Ribosomal_L1"/>
    <property type="match status" value="1"/>
</dbReference>
<dbReference type="SUPFAM" id="SSF56808">
    <property type="entry name" value="Ribosomal protein L1"/>
    <property type="match status" value="1"/>
</dbReference>
<dbReference type="PROSITE" id="PS01199">
    <property type="entry name" value="RIBOSOMAL_L1"/>
    <property type="match status" value="1"/>
</dbReference>
<reference key="1">
    <citation type="submission" date="2003-10" db="EMBL/GenBank/DDBJ databases">
        <title>The complete genome sequence of the alkaliphilic Bacillus clausii KSM-K16.</title>
        <authorList>
            <person name="Takaki Y."/>
            <person name="Kageyama Y."/>
            <person name="Shimamura S."/>
            <person name="Suzuki H."/>
            <person name="Nishi S."/>
            <person name="Hatada Y."/>
            <person name="Kawai S."/>
            <person name="Ito S."/>
            <person name="Horikoshi K."/>
        </authorList>
    </citation>
    <scope>NUCLEOTIDE SEQUENCE [LARGE SCALE GENOMIC DNA]</scope>
    <source>
        <strain>KSM-K16</strain>
    </source>
</reference>
<sequence length="231" mass="24910">MAKKGKKYADALKLVDRDTAYQAEEALELVKKTSVAKFDETVEVAVRLGVDPKKADQQIRGAVVLPHGTGKTQRVLVFAKGEKAKEAEAAGADYVGEDDLINKINQGWFDFDVIVATPDMMAQVGRLGRVLGPKGLMPNPKTGTVTFDVTKAVEEIKAGKVEYRVDKSGNIHVPIGKVSFDTPKLLENFQTIVETLHKVKPAAAKGTYVKNIAVASTMGPGIRVTTTAFAK</sequence>